<comment type="function">
    <text evidence="1">Catalyzes the hydrolysis of 1,4-dihydroxy-2-naphthoyl-CoA (DHNA-CoA) to 1,4-dihydroxy-2-naphthoate (DHNA), a reaction involved in phylloquinone (vitamin K1) biosynthesis.</text>
</comment>
<comment type="catalytic activity">
    <reaction evidence="1">
        <text>1,4-dihydroxy-2-naphthoyl-CoA + H2O = 1,4-dihydroxy-2-naphthoate + CoA + H(+)</text>
        <dbReference type="Rhea" id="RHEA:26309"/>
        <dbReference type="ChEBI" id="CHEBI:11173"/>
        <dbReference type="ChEBI" id="CHEBI:15377"/>
        <dbReference type="ChEBI" id="CHEBI:15378"/>
        <dbReference type="ChEBI" id="CHEBI:57287"/>
        <dbReference type="ChEBI" id="CHEBI:58897"/>
        <dbReference type="EC" id="3.1.2.28"/>
    </reaction>
</comment>
<comment type="pathway">
    <text evidence="1">Cofactor biosynthesis; phylloquinone biosynthesis.</text>
</comment>
<comment type="pathway">
    <text evidence="1">Quinol/quinone metabolism; 1,4-dihydroxy-2-naphthoate biosynthesis; 1,4-dihydroxy-2-naphthoate from chorismate: step 7/7.</text>
</comment>
<comment type="similarity">
    <text evidence="1">Belongs to the 4-hydroxybenzoyl-CoA thioesterase family. DHNA-CoA hydrolase subfamily.</text>
</comment>
<organism>
    <name type="scientific">Synechococcus sp. (strain CC9311)</name>
    <dbReference type="NCBI Taxonomy" id="64471"/>
    <lineage>
        <taxon>Bacteria</taxon>
        <taxon>Bacillati</taxon>
        <taxon>Cyanobacteriota</taxon>
        <taxon>Cyanophyceae</taxon>
        <taxon>Synechococcales</taxon>
        <taxon>Synechococcaceae</taxon>
        <taxon>Synechococcus</taxon>
    </lineage>
</organism>
<feature type="chain" id="PRO_0000377030" description="1,4-dihydroxy-2-naphthoyl-CoA hydrolase">
    <location>
        <begin position="1"/>
        <end position="152"/>
    </location>
</feature>
<feature type="active site" evidence="1">
    <location>
        <position position="20"/>
    </location>
</feature>
<keyword id="KW-0378">Hydrolase</keyword>
<keyword id="KW-1185">Reference proteome</keyword>
<gene>
    <name type="ordered locus">sync_2650</name>
</gene>
<reference key="1">
    <citation type="journal article" date="2006" name="Proc. Natl. Acad. Sci. U.S.A.">
        <title>Genome sequence of Synechococcus CC9311: insights into adaptation to a coastal environment.</title>
        <authorList>
            <person name="Palenik B."/>
            <person name="Ren Q."/>
            <person name="Dupont C.L."/>
            <person name="Myers G.S."/>
            <person name="Heidelberg J.F."/>
            <person name="Badger J.H."/>
            <person name="Madupu R."/>
            <person name="Nelson W.C."/>
            <person name="Brinkac L.M."/>
            <person name="Dodson R.J."/>
            <person name="Durkin A.S."/>
            <person name="Daugherty S.C."/>
            <person name="Sullivan S.A."/>
            <person name="Khouri H."/>
            <person name="Mohamoud Y."/>
            <person name="Halpin R."/>
            <person name="Paulsen I.T."/>
        </authorList>
    </citation>
    <scope>NUCLEOTIDE SEQUENCE [LARGE SCALE GENOMIC DNA]</scope>
    <source>
        <strain>CC9311</strain>
    </source>
</reference>
<sequence>MPSSDHWLQLQRNVRFGETDAAGVVHFYQLFRWCHEAWEESLARYGIAAAAIFPGCRDICQVPTVALPVVHCEADFQRPVHGGDDLRILLEPQRLNPGCFEVKYRFQLEDMDVARGLIRHLAIESESRRRCALPEPIDLWLEASTVGRLEPI</sequence>
<proteinExistence type="inferred from homology"/>
<accession>Q0I6T4</accession>
<protein>
    <recommendedName>
        <fullName evidence="1">1,4-dihydroxy-2-naphthoyl-CoA hydrolase</fullName>
        <shortName evidence="1">DHNA-CoA hydrolase</shortName>
        <ecNumber evidence="1">3.1.2.28</ecNumber>
    </recommendedName>
    <alternativeName>
        <fullName evidence="1">DHNA-CoA thioesterase</fullName>
    </alternativeName>
</protein>
<dbReference type="EC" id="3.1.2.28" evidence="1"/>
<dbReference type="EMBL" id="CP000435">
    <property type="protein sequence ID" value="ABI47625.1"/>
    <property type="molecule type" value="Genomic_DNA"/>
</dbReference>
<dbReference type="RefSeq" id="WP_011620542.1">
    <property type="nucleotide sequence ID" value="NC_008319.1"/>
</dbReference>
<dbReference type="SMR" id="Q0I6T4"/>
<dbReference type="STRING" id="64471.sync_2650"/>
<dbReference type="KEGG" id="syg:sync_2650"/>
<dbReference type="eggNOG" id="COG0824">
    <property type="taxonomic scope" value="Bacteria"/>
</dbReference>
<dbReference type="HOGENOM" id="CLU_101141_5_3_3"/>
<dbReference type="OrthoDB" id="9800856at2"/>
<dbReference type="UniPathway" id="UPA00995"/>
<dbReference type="UniPathway" id="UPA01057">
    <property type="reaction ID" value="UER01033"/>
</dbReference>
<dbReference type="Proteomes" id="UP000001961">
    <property type="component" value="Chromosome"/>
</dbReference>
<dbReference type="GO" id="GO:0061522">
    <property type="term" value="F:1,4-dihydroxy-2-naphthoyl-CoA thioesterase activity"/>
    <property type="evidence" value="ECO:0007669"/>
    <property type="project" value="UniProtKB-EC"/>
</dbReference>
<dbReference type="GO" id="GO:0042372">
    <property type="term" value="P:phylloquinone biosynthetic process"/>
    <property type="evidence" value="ECO:0007669"/>
    <property type="project" value="UniProtKB-UniRule"/>
</dbReference>
<dbReference type="CDD" id="cd00586">
    <property type="entry name" value="4HBT"/>
    <property type="match status" value="1"/>
</dbReference>
<dbReference type="Gene3D" id="3.10.129.10">
    <property type="entry name" value="Hotdog Thioesterase"/>
    <property type="match status" value="1"/>
</dbReference>
<dbReference type="HAMAP" id="MF_02101">
    <property type="entry name" value="DHNA_CoA_hydrolase"/>
    <property type="match status" value="1"/>
</dbReference>
<dbReference type="InterPro" id="IPR022829">
    <property type="entry name" value="DHNA_CoA_hydrolase"/>
</dbReference>
<dbReference type="InterPro" id="IPR029069">
    <property type="entry name" value="HotDog_dom_sf"/>
</dbReference>
<dbReference type="Pfam" id="PF13279">
    <property type="entry name" value="4HBT_2"/>
    <property type="match status" value="1"/>
</dbReference>
<dbReference type="SUPFAM" id="SSF54637">
    <property type="entry name" value="Thioesterase/thiol ester dehydrase-isomerase"/>
    <property type="match status" value="1"/>
</dbReference>
<name>DNCH_SYNS3</name>
<evidence type="ECO:0000255" key="1">
    <source>
        <dbReference type="HAMAP-Rule" id="MF_02101"/>
    </source>
</evidence>